<evidence type="ECO:0000250" key="1">
    <source>
        <dbReference type="UniProtKB" id="P02086"/>
    </source>
</evidence>
<evidence type="ECO:0000250" key="2">
    <source>
        <dbReference type="UniProtKB" id="P68871"/>
    </source>
</evidence>
<evidence type="ECO:0000255" key="3">
    <source>
        <dbReference type="PROSITE-ProRule" id="PRU00238"/>
    </source>
</evidence>
<feature type="chain" id="PRO_0000053098" description="Hemoglobin subunit beta">
    <location>
        <begin position="1"/>
        <end position="146"/>
    </location>
</feature>
<feature type="domain" description="Globin" evidence="3">
    <location>
        <begin position="2"/>
        <end position="146"/>
    </location>
</feature>
<feature type="binding site" description="distal binding residue">
    <location>
        <position position="63"/>
    </location>
    <ligand>
        <name>heme b</name>
        <dbReference type="ChEBI" id="CHEBI:60344"/>
    </ligand>
    <ligandPart>
        <name>Fe</name>
        <dbReference type="ChEBI" id="CHEBI:18248"/>
    </ligandPart>
</feature>
<feature type="binding site" description="proximal binding residue">
    <location>
        <position position="92"/>
    </location>
    <ligand>
        <name>heme b</name>
        <dbReference type="ChEBI" id="CHEBI:60344"/>
    </ligand>
    <ligandPart>
        <name>Fe</name>
        <dbReference type="ChEBI" id="CHEBI:18248"/>
    </ligandPart>
</feature>
<feature type="modified residue" description="N-acetylvaline" evidence="1">
    <location>
        <position position="1"/>
    </location>
</feature>
<feature type="modified residue" description="Phosphothreonine" evidence="2">
    <location>
        <position position="12"/>
    </location>
</feature>
<feature type="modified residue" description="Phosphoserine" evidence="2">
    <location>
        <position position="44"/>
    </location>
</feature>
<feature type="modified residue" description="N6-acetyllysine" evidence="2">
    <location>
        <position position="59"/>
    </location>
</feature>
<feature type="modified residue" description="N6-acetyllysine" evidence="2">
    <location>
        <position position="82"/>
    </location>
</feature>
<feature type="modified residue" description="S-nitrosocysteine" evidence="2">
    <location>
        <position position="93"/>
    </location>
</feature>
<feature type="modified residue" description="N6-acetyllysine" evidence="2">
    <location>
        <position position="144"/>
    </location>
</feature>
<gene>
    <name type="primary">HBB</name>
</gene>
<accession>P68055</accession>
<accession>P02037</accession>
<reference key="1">
    <citation type="journal article" date="1984" name="J. Biochem.">
        <title>Primary structures of adult hemoglobins of silvery marmoset, Callithrix argentatus, and cotton-headed tamarin, Saguinus oedipus.</title>
        <authorList>
            <person name="Maita T."/>
            <person name="Hayashida M."/>
            <person name="Matsuda G."/>
        </authorList>
    </citation>
    <scope>PROTEIN SEQUENCE</scope>
</reference>
<protein>
    <recommendedName>
        <fullName>Hemoglobin subunit beta</fullName>
    </recommendedName>
    <alternativeName>
        <fullName>Beta-globin</fullName>
    </alternativeName>
    <alternativeName>
        <fullName>Hemoglobin beta chain</fullName>
    </alternativeName>
</protein>
<comment type="function">
    <text>Involved in oxygen transport from the lung to the various peripheral tissues.</text>
</comment>
<comment type="subunit">
    <text>Heterotetramer of two alpha chains and two beta chains.</text>
</comment>
<comment type="tissue specificity">
    <text>Red blood cells.</text>
</comment>
<comment type="similarity">
    <text evidence="3">Belongs to the globin family.</text>
</comment>
<proteinExistence type="evidence at protein level"/>
<dbReference type="PIR" id="D28865">
    <property type="entry name" value="D28865"/>
</dbReference>
<dbReference type="SMR" id="P68055"/>
<dbReference type="GO" id="GO:0072562">
    <property type="term" value="C:blood microparticle"/>
    <property type="evidence" value="ECO:0007669"/>
    <property type="project" value="TreeGrafter"/>
</dbReference>
<dbReference type="GO" id="GO:0031838">
    <property type="term" value="C:haptoglobin-hemoglobin complex"/>
    <property type="evidence" value="ECO:0007669"/>
    <property type="project" value="TreeGrafter"/>
</dbReference>
<dbReference type="GO" id="GO:0005833">
    <property type="term" value="C:hemoglobin complex"/>
    <property type="evidence" value="ECO:0007669"/>
    <property type="project" value="InterPro"/>
</dbReference>
<dbReference type="GO" id="GO:0031720">
    <property type="term" value="F:haptoglobin binding"/>
    <property type="evidence" value="ECO:0007669"/>
    <property type="project" value="TreeGrafter"/>
</dbReference>
<dbReference type="GO" id="GO:0020037">
    <property type="term" value="F:heme binding"/>
    <property type="evidence" value="ECO:0007669"/>
    <property type="project" value="InterPro"/>
</dbReference>
<dbReference type="GO" id="GO:0031721">
    <property type="term" value="F:hemoglobin alpha binding"/>
    <property type="evidence" value="ECO:0007669"/>
    <property type="project" value="TreeGrafter"/>
</dbReference>
<dbReference type="GO" id="GO:0046872">
    <property type="term" value="F:metal ion binding"/>
    <property type="evidence" value="ECO:0007669"/>
    <property type="project" value="UniProtKB-KW"/>
</dbReference>
<dbReference type="GO" id="GO:0043177">
    <property type="term" value="F:organic acid binding"/>
    <property type="evidence" value="ECO:0007669"/>
    <property type="project" value="TreeGrafter"/>
</dbReference>
<dbReference type="GO" id="GO:0019825">
    <property type="term" value="F:oxygen binding"/>
    <property type="evidence" value="ECO:0007669"/>
    <property type="project" value="InterPro"/>
</dbReference>
<dbReference type="GO" id="GO:0005344">
    <property type="term" value="F:oxygen carrier activity"/>
    <property type="evidence" value="ECO:0007669"/>
    <property type="project" value="UniProtKB-KW"/>
</dbReference>
<dbReference type="GO" id="GO:0004601">
    <property type="term" value="F:peroxidase activity"/>
    <property type="evidence" value="ECO:0007669"/>
    <property type="project" value="TreeGrafter"/>
</dbReference>
<dbReference type="GO" id="GO:0042744">
    <property type="term" value="P:hydrogen peroxide catabolic process"/>
    <property type="evidence" value="ECO:0007669"/>
    <property type="project" value="TreeGrafter"/>
</dbReference>
<dbReference type="CDD" id="cd08925">
    <property type="entry name" value="Hb-beta-like"/>
    <property type="match status" value="1"/>
</dbReference>
<dbReference type="FunFam" id="1.10.490.10:FF:000001">
    <property type="entry name" value="Hemoglobin subunit beta"/>
    <property type="match status" value="1"/>
</dbReference>
<dbReference type="Gene3D" id="1.10.490.10">
    <property type="entry name" value="Globins"/>
    <property type="match status" value="1"/>
</dbReference>
<dbReference type="InterPro" id="IPR000971">
    <property type="entry name" value="Globin"/>
</dbReference>
<dbReference type="InterPro" id="IPR009050">
    <property type="entry name" value="Globin-like_sf"/>
</dbReference>
<dbReference type="InterPro" id="IPR012292">
    <property type="entry name" value="Globin/Proto"/>
</dbReference>
<dbReference type="InterPro" id="IPR002337">
    <property type="entry name" value="Hemoglobin_b"/>
</dbReference>
<dbReference type="InterPro" id="IPR050056">
    <property type="entry name" value="Hemoglobin_oxygen_transport"/>
</dbReference>
<dbReference type="PANTHER" id="PTHR11442">
    <property type="entry name" value="HEMOGLOBIN FAMILY MEMBER"/>
    <property type="match status" value="1"/>
</dbReference>
<dbReference type="PANTHER" id="PTHR11442:SF42">
    <property type="entry name" value="HEMOGLOBIN SUBUNIT BETA"/>
    <property type="match status" value="1"/>
</dbReference>
<dbReference type="Pfam" id="PF00042">
    <property type="entry name" value="Globin"/>
    <property type="match status" value="1"/>
</dbReference>
<dbReference type="PRINTS" id="PR00814">
    <property type="entry name" value="BETAHAEM"/>
</dbReference>
<dbReference type="SUPFAM" id="SSF46458">
    <property type="entry name" value="Globin-like"/>
    <property type="match status" value="1"/>
</dbReference>
<dbReference type="PROSITE" id="PS01033">
    <property type="entry name" value="GLOBIN"/>
    <property type="match status" value="1"/>
</dbReference>
<keyword id="KW-0007">Acetylation</keyword>
<keyword id="KW-0903">Direct protein sequencing</keyword>
<keyword id="KW-0349">Heme</keyword>
<keyword id="KW-0408">Iron</keyword>
<keyword id="KW-0479">Metal-binding</keyword>
<keyword id="KW-0561">Oxygen transport</keyword>
<keyword id="KW-0597">Phosphoprotein</keyword>
<keyword id="KW-0702">S-nitrosylation</keyword>
<keyword id="KW-0813">Transport</keyword>
<name>HBB_SAGOE</name>
<organism>
    <name type="scientific">Saguinus oedipus</name>
    <name type="common">Cotton-top tamarin</name>
    <dbReference type="NCBI Taxonomy" id="9490"/>
    <lineage>
        <taxon>Eukaryota</taxon>
        <taxon>Metazoa</taxon>
        <taxon>Chordata</taxon>
        <taxon>Craniata</taxon>
        <taxon>Vertebrata</taxon>
        <taxon>Euteleostomi</taxon>
        <taxon>Mammalia</taxon>
        <taxon>Eutheria</taxon>
        <taxon>Euarchontoglires</taxon>
        <taxon>Primates</taxon>
        <taxon>Haplorrhini</taxon>
        <taxon>Platyrrhini</taxon>
        <taxon>Cebidae</taxon>
        <taxon>Callitrichinae</taxon>
        <taxon>Saguinus</taxon>
    </lineage>
</organism>
<sequence>VHLTGEEKSAVTTLWGKVNVEEVGGEALGRLLVVYPWTQRFFESFGDLSSPDAVMNNPKVKAHGKKVLGAFSDGLAHLDNLKGTFAQLSELHCDKLHVDPENFRLLGNVLVCVLAHHFGKEFTPQVQAAYQKVVAGVANALAHKYH</sequence>